<evidence type="ECO:0000255" key="1">
    <source>
        <dbReference type="HAMAP-Rule" id="MF_01454"/>
    </source>
</evidence>
<evidence type="ECO:0000255" key="2">
    <source>
        <dbReference type="PROSITE-ProRule" id="PRU01231"/>
    </source>
</evidence>
<comment type="function">
    <text evidence="1">An essential GTPase which binds GTP, GDP and possibly (p)ppGpp with moderate affinity, with high nucleotide exchange rates and a fairly low GTP hydrolysis rate. Plays a role in control of the cell cycle, stress response, ribosome biogenesis and in those bacteria that undergo differentiation, in morphogenesis control.</text>
</comment>
<comment type="cofactor">
    <cofactor evidence="1">
        <name>Mg(2+)</name>
        <dbReference type="ChEBI" id="CHEBI:18420"/>
    </cofactor>
</comment>
<comment type="subunit">
    <text evidence="1">Monomer.</text>
</comment>
<comment type="subcellular location">
    <subcellularLocation>
        <location evidence="1">Cytoplasm</location>
    </subcellularLocation>
</comment>
<comment type="similarity">
    <text evidence="1">Belongs to the TRAFAC class OBG-HflX-like GTPase superfamily. OBG GTPase family.</text>
</comment>
<keyword id="KW-0963">Cytoplasm</keyword>
<keyword id="KW-0342">GTP-binding</keyword>
<keyword id="KW-0378">Hydrolase</keyword>
<keyword id="KW-0460">Magnesium</keyword>
<keyword id="KW-0479">Metal-binding</keyword>
<keyword id="KW-0547">Nucleotide-binding</keyword>
<keyword id="KW-1185">Reference proteome</keyword>
<feature type="chain" id="PRO_0000386245" description="GTPase Obg">
    <location>
        <begin position="1"/>
        <end position="387"/>
    </location>
</feature>
<feature type="domain" description="Obg" evidence="2">
    <location>
        <begin position="1"/>
        <end position="159"/>
    </location>
</feature>
<feature type="domain" description="OBG-type G" evidence="1">
    <location>
        <begin position="160"/>
        <end position="333"/>
    </location>
</feature>
<feature type="binding site" evidence="1">
    <location>
        <begin position="166"/>
        <end position="173"/>
    </location>
    <ligand>
        <name>GTP</name>
        <dbReference type="ChEBI" id="CHEBI:37565"/>
    </ligand>
</feature>
<feature type="binding site" evidence="1">
    <location>
        <position position="173"/>
    </location>
    <ligand>
        <name>Mg(2+)</name>
        <dbReference type="ChEBI" id="CHEBI:18420"/>
    </ligand>
</feature>
<feature type="binding site" evidence="1">
    <location>
        <begin position="191"/>
        <end position="195"/>
    </location>
    <ligand>
        <name>GTP</name>
        <dbReference type="ChEBI" id="CHEBI:37565"/>
    </ligand>
</feature>
<feature type="binding site" evidence="1">
    <location>
        <position position="193"/>
    </location>
    <ligand>
        <name>Mg(2+)</name>
        <dbReference type="ChEBI" id="CHEBI:18420"/>
    </ligand>
</feature>
<feature type="binding site" evidence="1">
    <location>
        <begin position="213"/>
        <end position="216"/>
    </location>
    <ligand>
        <name>GTP</name>
        <dbReference type="ChEBI" id="CHEBI:37565"/>
    </ligand>
</feature>
<feature type="binding site" evidence="1">
    <location>
        <begin position="283"/>
        <end position="286"/>
    </location>
    <ligand>
        <name>GTP</name>
        <dbReference type="ChEBI" id="CHEBI:37565"/>
    </ligand>
</feature>
<feature type="binding site" evidence="1">
    <location>
        <begin position="314"/>
        <end position="316"/>
    </location>
    <ligand>
        <name>GTP</name>
        <dbReference type="ChEBI" id="CHEBI:37565"/>
    </ligand>
</feature>
<accession>A8H0U4</accession>
<dbReference type="EC" id="3.6.5.-" evidence="1"/>
<dbReference type="EMBL" id="CP000851">
    <property type="protein sequence ID" value="ABV86181.1"/>
    <property type="molecule type" value="Genomic_DNA"/>
</dbReference>
<dbReference type="RefSeq" id="WP_012154115.1">
    <property type="nucleotide sequence ID" value="NC_009901.1"/>
</dbReference>
<dbReference type="SMR" id="A8H0U4"/>
<dbReference type="STRING" id="398579.Spea_0854"/>
<dbReference type="KEGG" id="spl:Spea_0854"/>
<dbReference type="eggNOG" id="COG0536">
    <property type="taxonomic scope" value="Bacteria"/>
</dbReference>
<dbReference type="HOGENOM" id="CLU_011747_2_0_6"/>
<dbReference type="OrthoDB" id="9807318at2"/>
<dbReference type="Proteomes" id="UP000002608">
    <property type="component" value="Chromosome"/>
</dbReference>
<dbReference type="GO" id="GO:0005737">
    <property type="term" value="C:cytoplasm"/>
    <property type="evidence" value="ECO:0007669"/>
    <property type="project" value="UniProtKB-SubCell"/>
</dbReference>
<dbReference type="GO" id="GO:0005525">
    <property type="term" value="F:GTP binding"/>
    <property type="evidence" value="ECO:0007669"/>
    <property type="project" value="UniProtKB-UniRule"/>
</dbReference>
<dbReference type="GO" id="GO:0003924">
    <property type="term" value="F:GTPase activity"/>
    <property type="evidence" value="ECO:0007669"/>
    <property type="project" value="UniProtKB-UniRule"/>
</dbReference>
<dbReference type="GO" id="GO:0000287">
    <property type="term" value="F:magnesium ion binding"/>
    <property type="evidence" value="ECO:0007669"/>
    <property type="project" value="InterPro"/>
</dbReference>
<dbReference type="GO" id="GO:0042254">
    <property type="term" value="P:ribosome biogenesis"/>
    <property type="evidence" value="ECO:0007669"/>
    <property type="project" value="UniProtKB-UniRule"/>
</dbReference>
<dbReference type="CDD" id="cd01898">
    <property type="entry name" value="Obg"/>
    <property type="match status" value="1"/>
</dbReference>
<dbReference type="FunFam" id="2.70.210.12:FF:000001">
    <property type="entry name" value="GTPase Obg"/>
    <property type="match status" value="1"/>
</dbReference>
<dbReference type="Gene3D" id="2.70.210.12">
    <property type="entry name" value="GTP1/OBG domain"/>
    <property type="match status" value="1"/>
</dbReference>
<dbReference type="Gene3D" id="3.40.50.300">
    <property type="entry name" value="P-loop containing nucleotide triphosphate hydrolases"/>
    <property type="match status" value="1"/>
</dbReference>
<dbReference type="HAMAP" id="MF_01454">
    <property type="entry name" value="GTPase_Obg"/>
    <property type="match status" value="1"/>
</dbReference>
<dbReference type="InterPro" id="IPR031167">
    <property type="entry name" value="G_OBG"/>
</dbReference>
<dbReference type="InterPro" id="IPR006073">
    <property type="entry name" value="GTP-bd"/>
</dbReference>
<dbReference type="InterPro" id="IPR014100">
    <property type="entry name" value="GTP-bd_Obg/CgtA"/>
</dbReference>
<dbReference type="InterPro" id="IPR006074">
    <property type="entry name" value="GTP1-OBG_CS"/>
</dbReference>
<dbReference type="InterPro" id="IPR006169">
    <property type="entry name" value="GTP1_OBG_dom"/>
</dbReference>
<dbReference type="InterPro" id="IPR036726">
    <property type="entry name" value="GTP1_OBG_dom_sf"/>
</dbReference>
<dbReference type="InterPro" id="IPR045086">
    <property type="entry name" value="OBG_GTPase"/>
</dbReference>
<dbReference type="InterPro" id="IPR027417">
    <property type="entry name" value="P-loop_NTPase"/>
</dbReference>
<dbReference type="NCBIfam" id="TIGR02729">
    <property type="entry name" value="Obg_CgtA"/>
    <property type="match status" value="1"/>
</dbReference>
<dbReference type="NCBIfam" id="NF008955">
    <property type="entry name" value="PRK12297.1"/>
    <property type="match status" value="1"/>
</dbReference>
<dbReference type="NCBIfam" id="NF008956">
    <property type="entry name" value="PRK12299.1"/>
    <property type="match status" value="1"/>
</dbReference>
<dbReference type="PANTHER" id="PTHR11702">
    <property type="entry name" value="DEVELOPMENTALLY REGULATED GTP-BINDING PROTEIN-RELATED"/>
    <property type="match status" value="1"/>
</dbReference>
<dbReference type="PANTHER" id="PTHR11702:SF31">
    <property type="entry name" value="MITOCHONDRIAL RIBOSOME-ASSOCIATED GTPASE 2"/>
    <property type="match status" value="1"/>
</dbReference>
<dbReference type="Pfam" id="PF01018">
    <property type="entry name" value="GTP1_OBG"/>
    <property type="match status" value="1"/>
</dbReference>
<dbReference type="Pfam" id="PF01926">
    <property type="entry name" value="MMR_HSR1"/>
    <property type="match status" value="1"/>
</dbReference>
<dbReference type="PIRSF" id="PIRSF002401">
    <property type="entry name" value="GTP_bd_Obg/CgtA"/>
    <property type="match status" value="1"/>
</dbReference>
<dbReference type="PRINTS" id="PR00326">
    <property type="entry name" value="GTP1OBG"/>
</dbReference>
<dbReference type="SUPFAM" id="SSF82051">
    <property type="entry name" value="Obg GTP-binding protein N-terminal domain"/>
    <property type="match status" value="1"/>
</dbReference>
<dbReference type="SUPFAM" id="SSF52540">
    <property type="entry name" value="P-loop containing nucleoside triphosphate hydrolases"/>
    <property type="match status" value="1"/>
</dbReference>
<dbReference type="PROSITE" id="PS51710">
    <property type="entry name" value="G_OBG"/>
    <property type="match status" value="1"/>
</dbReference>
<dbReference type="PROSITE" id="PS00905">
    <property type="entry name" value="GTP1_OBG"/>
    <property type="match status" value="1"/>
</dbReference>
<dbReference type="PROSITE" id="PS51883">
    <property type="entry name" value="OBG"/>
    <property type="match status" value="1"/>
</dbReference>
<reference key="1">
    <citation type="submission" date="2007-10" db="EMBL/GenBank/DDBJ databases">
        <title>Complete sequence of Shewanella pealeana ATCC 700345.</title>
        <authorList>
            <consortium name="US DOE Joint Genome Institute"/>
            <person name="Copeland A."/>
            <person name="Lucas S."/>
            <person name="Lapidus A."/>
            <person name="Barry K."/>
            <person name="Glavina del Rio T."/>
            <person name="Dalin E."/>
            <person name="Tice H."/>
            <person name="Pitluck S."/>
            <person name="Chertkov O."/>
            <person name="Brettin T."/>
            <person name="Bruce D."/>
            <person name="Detter J.C."/>
            <person name="Han C."/>
            <person name="Schmutz J."/>
            <person name="Larimer F."/>
            <person name="Land M."/>
            <person name="Hauser L."/>
            <person name="Kyrpides N."/>
            <person name="Kim E."/>
            <person name="Zhao J.-S.Z."/>
            <person name="Manno D."/>
            <person name="Hawari J."/>
            <person name="Richardson P."/>
        </authorList>
    </citation>
    <scope>NUCLEOTIDE SEQUENCE [LARGE SCALE GENOMIC DNA]</scope>
    <source>
        <strain>ATCC 700345 / ANG-SQ1</strain>
    </source>
</reference>
<proteinExistence type="inferred from homology"/>
<gene>
    <name evidence="1" type="primary">obg</name>
    <name type="ordered locus">Spea_0854</name>
</gene>
<name>OBG_SHEPA</name>
<sequence length="387" mass="42519">MKFVDEAIIRVEAGNGGSGCVSFRREKYVPDGGPDGGDGGDGGSVYLQADENLNTLITYQFERFHIAERGKNGRGRDCTGHGGEDLILKVPVGTRAIDNDTEESLGDLTTHGQKLLVAKGGFHGLGNTRFKSSTNRAPRQKTLGTDGEVRSLKLELLLLADVGLLGMPNAGKSTFIRSVSKAKPKVADYPFTTLVPNLGVVNPRPGQSFVIADIPGLIEGAADGAGLGVQFLKHLERCRVLLHILDVEPIDGSDPVEAARAIVAELEKHSPKLAGKPRWLVINKADLMLPEELQERIDRIVKELEWEGDIYTISAYNREGTAELALKLLDFIDSLPPEEEVDADAEVEFKWDNYHQNANDSINEDFNDDFDDDFDEDDYDVEIIYQR</sequence>
<organism>
    <name type="scientific">Shewanella pealeana (strain ATCC 700345 / ANG-SQ1)</name>
    <dbReference type="NCBI Taxonomy" id="398579"/>
    <lineage>
        <taxon>Bacteria</taxon>
        <taxon>Pseudomonadati</taxon>
        <taxon>Pseudomonadota</taxon>
        <taxon>Gammaproteobacteria</taxon>
        <taxon>Alteromonadales</taxon>
        <taxon>Shewanellaceae</taxon>
        <taxon>Shewanella</taxon>
    </lineage>
</organism>
<protein>
    <recommendedName>
        <fullName evidence="1">GTPase Obg</fullName>
        <ecNumber evidence="1">3.6.5.-</ecNumber>
    </recommendedName>
    <alternativeName>
        <fullName evidence="1">GTP-binding protein Obg</fullName>
    </alternativeName>
</protein>